<proteinExistence type="evidence at protein level"/>
<evidence type="ECO:0000250" key="1">
    <source>
        <dbReference type="UniProtKB" id="Q6AYH3"/>
    </source>
</evidence>
<evidence type="ECO:0000250" key="2">
    <source>
        <dbReference type="UniProtKB" id="Q969K3"/>
    </source>
</evidence>
<evidence type="ECO:0000255" key="3">
    <source>
        <dbReference type="PROSITE-ProRule" id="PRU00175"/>
    </source>
</evidence>
<evidence type="ECO:0000256" key="4">
    <source>
        <dbReference type="SAM" id="MobiDB-lite"/>
    </source>
</evidence>
<evidence type="ECO:0000269" key="5">
    <source>
    </source>
</evidence>
<evidence type="ECO:0000305" key="6"/>
<evidence type="ECO:0000312" key="7">
    <source>
        <dbReference type="EMBL" id="AAL30770.1"/>
    </source>
</evidence>
<evidence type="ECO:0000312" key="8">
    <source>
        <dbReference type="MGI" id="MGI:2153340"/>
    </source>
</evidence>
<evidence type="ECO:0007744" key="9">
    <source>
    </source>
</evidence>
<protein>
    <recommendedName>
        <fullName evidence="6">E3 ubiquitin-protein ligase RNF34</fullName>
        <ecNumber evidence="2">2.3.2.27</ecNumber>
    </recommendedName>
    <alternativeName>
        <fullName evidence="7">Phafin-1</fullName>
    </alternativeName>
    <alternativeName>
        <fullName evidence="8">RING finger protein 34</fullName>
    </alternativeName>
    <alternativeName>
        <fullName evidence="6">RING-type E3 ubiquitin transferase RNF34</fullName>
    </alternativeName>
</protein>
<sequence>MKAGATSMWASCCGLLNEVMGTGAVRGQQAGFPGSTGPFRFTPSSDFPTYPPAATEGPNIVCKACGLSFSVFRKKHVCCDCKKDFCSLCSVSQENLRRCSTCHLLQETAFQRPQLMRLKVKDLRQYLLLRNIPTDTCREKEDLVDLVLCHRGLGSGDDLDSSSLNSSRSQTSSFFTQSLFSNYTPPSATVSSFQGELMDRDGAFRSEVLAQVQSEIASANTDDDDDDDDDDDDDEDDDDEQEEEEQNPGLSKKKARASLSDLSSLEEVEGMSVRQLKEILARNFVNYSGCCEKWELVEKVNRLYKENEENQKSYGERMQLQDEEDDSLCRICMDAVIDCVLLECGHMVTCTKCGKRMSECPICRQYVVRAVHVFKS</sequence>
<reference key="1">
    <citation type="submission" date="2001-10" db="EMBL/GenBank/DDBJ databases">
        <authorList>
            <person name="Hong W."/>
        </authorList>
    </citation>
    <scope>NUCLEOTIDE SEQUENCE [MRNA]</scope>
    <source>
        <strain>C57BL/6J</strain>
    </source>
</reference>
<reference key="2">
    <citation type="journal article" date="2005" name="Science">
        <title>The transcriptional landscape of the mammalian genome.</title>
        <authorList>
            <person name="Carninci P."/>
            <person name="Kasukawa T."/>
            <person name="Katayama S."/>
            <person name="Gough J."/>
            <person name="Frith M.C."/>
            <person name="Maeda N."/>
            <person name="Oyama R."/>
            <person name="Ravasi T."/>
            <person name="Lenhard B."/>
            <person name="Wells C."/>
            <person name="Kodzius R."/>
            <person name="Shimokawa K."/>
            <person name="Bajic V.B."/>
            <person name="Brenner S.E."/>
            <person name="Batalov S."/>
            <person name="Forrest A.R."/>
            <person name="Zavolan M."/>
            <person name="Davis M.J."/>
            <person name="Wilming L.G."/>
            <person name="Aidinis V."/>
            <person name="Allen J.E."/>
            <person name="Ambesi-Impiombato A."/>
            <person name="Apweiler R."/>
            <person name="Aturaliya R.N."/>
            <person name="Bailey T.L."/>
            <person name="Bansal M."/>
            <person name="Baxter L."/>
            <person name="Beisel K.W."/>
            <person name="Bersano T."/>
            <person name="Bono H."/>
            <person name="Chalk A.M."/>
            <person name="Chiu K.P."/>
            <person name="Choudhary V."/>
            <person name="Christoffels A."/>
            <person name="Clutterbuck D.R."/>
            <person name="Crowe M.L."/>
            <person name="Dalla E."/>
            <person name="Dalrymple B.P."/>
            <person name="de Bono B."/>
            <person name="Della Gatta G."/>
            <person name="di Bernardo D."/>
            <person name="Down T."/>
            <person name="Engstrom P."/>
            <person name="Fagiolini M."/>
            <person name="Faulkner G."/>
            <person name="Fletcher C.F."/>
            <person name="Fukushima T."/>
            <person name="Furuno M."/>
            <person name="Futaki S."/>
            <person name="Gariboldi M."/>
            <person name="Georgii-Hemming P."/>
            <person name="Gingeras T.R."/>
            <person name="Gojobori T."/>
            <person name="Green R.E."/>
            <person name="Gustincich S."/>
            <person name="Harbers M."/>
            <person name="Hayashi Y."/>
            <person name="Hensch T.K."/>
            <person name="Hirokawa N."/>
            <person name="Hill D."/>
            <person name="Huminiecki L."/>
            <person name="Iacono M."/>
            <person name="Ikeo K."/>
            <person name="Iwama A."/>
            <person name="Ishikawa T."/>
            <person name="Jakt M."/>
            <person name="Kanapin A."/>
            <person name="Katoh M."/>
            <person name="Kawasawa Y."/>
            <person name="Kelso J."/>
            <person name="Kitamura H."/>
            <person name="Kitano H."/>
            <person name="Kollias G."/>
            <person name="Krishnan S.P."/>
            <person name="Kruger A."/>
            <person name="Kummerfeld S.K."/>
            <person name="Kurochkin I.V."/>
            <person name="Lareau L.F."/>
            <person name="Lazarevic D."/>
            <person name="Lipovich L."/>
            <person name="Liu J."/>
            <person name="Liuni S."/>
            <person name="McWilliam S."/>
            <person name="Madan Babu M."/>
            <person name="Madera M."/>
            <person name="Marchionni L."/>
            <person name="Matsuda H."/>
            <person name="Matsuzawa S."/>
            <person name="Miki H."/>
            <person name="Mignone F."/>
            <person name="Miyake S."/>
            <person name="Morris K."/>
            <person name="Mottagui-Tabar S."/>
            <person name="Mulder N."/>
            <person name="Nakano N."/>
            <person name="Nakauchi H."/>
            <person name="Ng P."/>
            <person name="Nilsson R."/>
            <person name="Nishiguchi S."/>
            <person name="Nishikawa S."/>
            <person name="Nori F."/>
            <person name="Ohara O."/>
            <person name="Okazaki Y."/>
            <person name="Orlando V."/>
            <person name="Pang K.C."/>
            <person name="Pavan W.J."/>
            <person name="Pavesi G."/>
            <person name="Pesole G."/>
            <person name="Petrovsky N."/>
            <person name="Piazza S."/>
            <person name="Reed J."/>
            <person name="Reid J.F."/>
            <person name="Ring B.Z."/>
            <person name="Ringwald M."/>
            <person name="Rost B."/>
            <person name="Ruan Y."/>
            <person name="Salzberg S.L."/>
            <person name="Sandelin A."/>
            <person name="Schneider C."/>
            <person name="Schoenbach C."/>
            <person name="Sekiguchi K."/>
            <person name="Semple C.A."/>
            <person name="Seno S."/>
            <person name="Sessa L."/>
            <person name="Sheng Y."/>
            <person name="Shibata Y."/>
            <person name="Shimada H."/>
            <person name="Shimada K."/>
            <person name="Silva D."/>
            <person name="Sinclair B."/>
            <person name="Sperling S."/>
            <person name="Stupka E."/>
            <person name="Sugiura K."/>
            <person name="Sultana R."/>
            <person name="Takenaka Y."/>
            <person name="Taki K."/>
            <person name="Tammoja K."/>
            <person name="Tan S.L."/>
            <person name="Tang S."/>
            <person name="Taylor M.S."/>
            <person name="Tegner J."/>
            <person name="Teichmann S.A."/>
            <person name="Ueda H.R."/>
            <person name="van Nimwegen E."/>
            <person name="Verardo R."/>
            <person name="Wei C.L."/>
            <person name="Yagi K."/>
            <person name="Yamanishi H."/>
            <person name="Zabarovsky E."/>
            <person name="Zhu S."/>
            <person name="Zimmer A."/>
            <person name="Hide W."/>
            <person name="Bult C."/>
            <person name="Grimmond S.M."/>
            <person name="Teasdale R.D."/>
            <person name="Liu E.T."/>
            <person name="Brusic V."/>
            <person name="Quackenbush J."/>
            <person name="Wahlestedt C."/>
            <person name="Mattick J.S."/>
            <person name="Hume D.A."/>
            <person name="Kai C."/>
            <person name="Sasaki D."/>
            <person name="Tomaru Y."/>
            <person name="Fukuda S."/>
            <person name="Kanamori-Katayama M."/>
            <person name="Suzuki M."/>
            <person name="Aoki J."/>
            <person name="Arakawa T."/>
            <person name="Iida J."/>
            <person name="Imamura K."/>
            <person name="Itoh M."/>
            <person name="Kato T."/>
            <person name="Kawaji H."/>
            <person name="Kawagashira N."/>
            <person name="Kawashima T."/>
            <person name="Kojima M."/>
            <person name="Kondo S."/>
            <person name="Konno H."/>
            <person name="Nakano K."/>
            <person name="Ninomiya N."/>
            <person name="Nishio T."/>
            <person name="Okada M."/>
            <person name="Plessy C."/>
            <person name="Shibata K."/>
            <person name="Shiraki T."/>
            <person name="Suzuki S."/>
            <person name="Tagami M."/>
            <person name="Waki K."/>
            <person name="Watahiki A."/>
            <person name="Okamura-Oho Y."/>
            <person name="Suzuki H."/>
            <person name="Kawai J."/>
            <person name="Hayashizaki Y."/>
        </authorList>
    </citation>
    <scope>NUCLEOTIDE SEQUENCE [LARGE SCALE MRNA]</scope>
    <source>
        <strain>C57BL/6J</strain>
        <tissue>Bone</tissue>
        <tissue>Bone marrow</tissue>
        <tissue>Corpora quadrigemina</tissue>
        <tissue>Head</tissue>
        <tissue>Testis</tissue>
    </source>
</reference>
<reference key="3">
    <citation type="journal article" date="2004" name="Genome Res.">
        <title>The status, quality, and expansion of the NIH full-length cDNA project: the Mammalian Gene Collection (MGC).</title>
        <authorList>
            <consortium name="The MGC Project Team"/>
        </authorList>
    </citation>
    <scope>NUCLEOTIDE SEQUENCE [LARGE SCALE MRNA]</scope>
    <source>
        <strain>FVB/N</strain>
        <tissue>Mammary tumor</tissue>
    </source>
</reference>
<reference key="4">
    <citation type="journal article" date="2007" name="Proc. Natl. Acad. Sci. U.S.A.">
        <title>Large-scale phosphorylation analysis of mouse liver.</title>
        <authorList>
            <person name="Villen J."/>
            <person name="Beausoleil S.A."/>
            <person name="Gerber S.A."/>
            <person name="Gygi S.P."/>
        </authorList>
    </citation>
    <scope>IDENTIFICATION BY MASS SPECTROMETRY [LARGE SCALE ANALYSIS]</scope>
    <source>
        <tissue>Liver</tissue>
    </source>
</reference>
<reference key="5">
    <citation type="journal article" date="2010" name="Cell">
        <title>A tissue-specific atlas of mouse protein phosphorylation and expression.</title>
        <authorList>
            <person name="Huttlin E.L."/>
            <person name="Jedrychowski M.P."/>
            <person name="Elias J.E."/>
            <person name="Goswami T."/>
            <person name="Rad R."/>
            <person name="Beausoleil S.A."/>
            <person name="Villen J."/>
            <person name="Haas W."/>
            <person name="Sowa M.E."/>
            <person name="Gygi S.P."/>
        </authorList>
    </citation>
    <scope>PHOSPHORYLATION [LARGE SCALE ANALYSIS] AT SER-258 AND SER-260</scope>
    <scope>IDENTIFICATION BY MASS SPECTROMETRY [LARGE SCALE ANALYSIS]</scope>
    <source>
        <tissue>Brain</tissue>
        <tissue>Brown adipose tissue</tissue>
        <tissue>Heart</tissue>
        <tissue>Kidney</tissue>
        <tissue>Lung</tissue>
        <tissue>Pancreas</tissue>
        <tissue>Spleen</tissue>
        <tissue>Testis</tissue>
    </source>
</reference>
<reference key="6">
    <citation type="journal article" date="2012" name="Mol. Cell. Biol.">
        <title>RNF34 is a cold-regulated E3 ubiquitin ligase for PGC-1alpha and modulates brown fat cell metabolism.</title>
        <authorList>
            <person name="Wei P."/>
            <person name="Pan D."/>
            <person name="Mao C."/>
            <person name="Wang Y.X."/>
        </authorList>
    </citation>
    <scope>FUNCTION</scope>
    <scope>INDUCTION</scope>
</reference>
<organism>
    <name type="scientific">Mus musculus</name>
    <name type="common">Mouse</name>
    <dbReference type="NCBI Taxonomy" id="10090"/>
    <lineage>
        <taxon>Eukaryota</taxon>
        <taxon>Metazoa</taxon>
        <taxon>Chordata</taxon>
        <taxon>Craniata</taxon>
        <taxon>Vertebrata</taxon>
        <taxon>Euteleostomi</taxon>
        <taxon>Mammalia</taxon>
        <taxon>Eutheria</taxon>
        <taxon>Euarchontoglires</taxon>
        <taxon>Glires</taxon>
        <taxon>Rodentia</taxon>
        <taxon>Myomorpha</taxon>
        <taxon>Muroidea</taxon>
        <taxon>Muridae</taxon>
        <taxon>Murinae</taxon>
        <taxon>Mus</taxon>
        <taxon>Mus</taxon>
    </lineage>
</organism>
<name>RNF34_MOUSE</name>
<accession>Q99KR6</accession>
<accession>Q3UV45</accession>
<dbReference type="EC" id="2.3.2.27" evidence="2"/>
<dbReference type="EMBL" id="AF434815">
    <property type="protein sequence ID" value="AAL30770.1"/>
    <property type="molecule type" value="mRNA"/>
</dbReference>
<dbReference type="EMBL" id="AK045696">
    <property type="protein sequence ID" value="BAC32461.1"/>
    <property type="molecule type" value="mRNA"/>
</dbReference>
<dbReference type="EMBL" id="AK046274">
    <property type="protein sequence ID" value="BAC32666.1"/>
    <property type="molecule type" value="mRNA"/>
</dbReference>
<dbReference type="EMBL" id="AK046381">
    <property type="protein sequence ID" value="BAC32697.1"/>
    <property type="molecule type" value="mRNA"/>
</dbReference>
<dbReference type="EMBL" id="AK077221">
    <property type="protein sequence ID" value="BAC36693.1"/>
    <property type="molecule type" value="mRNA"/>
</dbReference>
<dbReference type="EMBL" id="AK132330">
    <property type="protein sequence ID" value="BAE21109.1"/>
    <property type="molecule type" value="mRNA"/>
</dbReference>
<dbReference type="EMBL" id="AK137606">
    <property type="protein sequence ID" value="BAE23428.1"/>
    <property type="molecule type" value="mRNA"/>
</dbReference>
<dbReference type="EMBL" id="AK150976">
    <property type="protein sequence ID" value="BAE30005.1"/>
    <property type="molecule type" value="mRNA"/>
</dbReference>
<dbReference type="EMBL" id="AK159753">
    <property type="protein sequence ID" value="BAE35344.1"/>
    <property type="molecule type" value="mRNA"/>
</dbReference>
<dbReference type="EMBL" id="BC004042">
    <property type="protein sequence ID" value="AAH04042.1"/>
    <property type="molecule type" value="mRNA"/>
</dbReference>
<dbReference type="CCDS" id="CCDS19656.1"/>
<dbReference type="RefSeq" id="NP_085041.1">
    <property type="nucleotide sequence ID" value="NM_030564.2"/>
</dbReference>
<dbReference type="SMR" id="Q99KR6"/>
<dbReference type="FunCoup" id="Q99KR6">
    <property type="interactions" value="5423"/>
</dbReference>
<dbReference type="STRING" id="10090.ENSMUSP00000031434"/>
<dbReference type="GlyGen" id="Q99KR6">
    <property type="glycosylation" value="3 sites, 1 N-linked glycan (1 site), 1 O-linked glycan (2 sites)"/>
</dbReference>
<dbReference type="iPTMnet" id="Q99KR6"/>
<dbReference type="PhosphoSitePlus" id="Q99KR6"/>
<dbReference type="SwissPalm" id="Q99KR6"/>
<dbReference type="jPOST" id="Q99KR6"/>
<dbReference type="PaxDb" id="10090-ENSMUSP00000031434"/>
<dbReference type="PeptideAtlas" id="Q99KR6"/>
<dbReference type="ProteomicsDB" id="300500"/>
<dbReference type="Pumba" id="Q99KR6"/>
<dbReference type="Antibodypedia" id="31576">
    <property type="antibodies" value="291 antibodies from 32 providers"/>
</dbReference>
<dbReference type="DNASU" id="80751"/>
<dbReference type="Ensembl" id="ENSMUST00000031434.8">
    <property type="protein sequence ID" value="ENSMUSP00000031434.7"/>
    <property type="gene ID" value="ENSMUSG00000029474.8"/>
</dbReference>
<dbReference type="GeneID" id="80751"/>
<dbReference type="KEGG" id="mmu:80751"/>
<dbReference type="UCSC" id="uc008zmn.1">
    <property type="organism name" value="mouse"/>
</dbReference>
<dbReference type="AGR" id="MGI:2153340"/>
<dbReference type="CTD" id="80196"/>
<dbReference type="MGI" id="MGI:2153340">
    <property type="gene designation" value="Rnf34"/>
</dbReference>
<dbReference type="VEuPathDB" id="HostDB:ENSMUSG00000029474"/>
<dbReference type="eggNOG" id="KOG4275">
    <property type="taxonomic scope" value="Eukaryota"/>
</dbReference>
<dbReference type="GeneTree" id="ENSGT00390000012719"/>
<dbReference type="HOGENOM" id="CLU_041431_1_0_1"/>
<dbReference type="InParanoid" id="Q99KR6"/>
<dbReference type="OMA" id="SYSGCCE"/>
<dbReference type="OrthoDB" id="3045089at2759"/>
<dbReference type="PhylomeDB" id="Q99KR6"/>
<dbReference type="TreeFam" id="TF325195"/>
<dbReference type="Reactome" id="R-MMU-6804757">
    <property type="pathway name" value="Regulation of TP53 Degradation"/>
</dbReference>
<dbReference type="Reactome" id="R-MMU-983168">
    <property type="pathway name" value="Antigen processing: Ubiquitination &amp; Proteasome degradation"/>
</dbReference>
<dbReference type="UniPathway" id="UPA00143"/>
<dbReference type="BioGRID-ORCS" id="80751">
    <property type="hits" value="0 hits in 78 CRISPR screens"/>
</dbReference>
<dbReference type="ChiTaRS" id="Rnf34">
    <property type="organism name" value="mouse"/>
</dbReference>
<dbReference type="PRO" id="PR:Q99KR6"/>
<dbReference type="Proteomes" id="UP000000589">
    <property type="component" value="Chromosome 5"/>
</dbReference>
<dbReference type="RNAct" id="Q99KR6">
    <property type="molecule type" value="protein"/>
</dbReference>
<dbReference type="Bgee" id="ENSMUSG00000029474">
    <property type="expression patterns" value="Expressed in animal zygote and 259 other cell types or tissues"/>
</dbReference>
<dbReference type="ExpressionAtlas" id="Q99KR6">
    <property type="expression patterns" value="baseline and differential"/>
</dbReference>
<dbReference type="GO" id="GO:0005737">
    <property type="term" value="C:cytoplasm"/>
    <property type="evidence" value="ECO:0000250"/>
    <property type="project" value="UniProtKB"/>
</dbReference>
<dbReference type="GO" id="GO:0005829">
    <property type="term" value="C:cytosol"/>
    <property type="evidence" value="ECO:0007669"/>
    <property type="project" value="UniProtKB-SubCell"/>
</dbReference>
<dbReference type="GO" id="GO:0012505">
    <property type="term" value="C:endomembrane system"/>
    <property type="evidence" value="ECO:0007669"/>
    <property type="project" value="UniProtKB-SubCell"/>
</dbReference>
<dbReference type="GO" id="GO:0016607">
    <property type="term" value="C:nuclear speck"/>
    <property type="evidence" value="ECO:0007669"/>
    <property type="project" value="UniProtKB-SubCell"/>
</dbReference>
<dbReference type="GO" id="GO:0005634">
    <property type="term" value="C:nucleus"/>
    <property type="evidence" value="ECO:0000250"/>
    <property type="project" value="UniProtKB"/>
</dbReference>
<dbReference type="GO" id="GO:0005886">
    <property type="term" value="C:plasma membrane"/>
    <property type="evidence" value="ECO:0000250"/>
    <property type="project" value="UniProtKB"/>
</dbReference>
<dbReference type="GO" id="GO:0002039">
    <property type="term" value="F:p53 binding"/>
    <property type="evidence" value="ECO:0007669"/>
    <property type="project" value="Ensembl"/>
</dbReference>
<dbReference type="GO" id="GO:1901981">
    <property type="term" value="F:phosphatidylinositol phosphate binding"/>
    <property type="evidence" value="ECO:0000250"/>
    <property type="project" value="UniProtKB"/>
</dbReference>
<dbReference type="GO" id="GO:0061630">
    <property type="term" value="F:ubiquitin protein ligase activity"/>
    <property type="evidence" value="ECO:0000250"/>
    <property type="project" value="UniProtKB"/>
</dbReference>
<dbReference type="GO" id="GO:0031625">
    <property type="term" value="F:ubiquitin protein ligase binding"/>
    <property type="evidence" value="ECO:0007669"/>
    <property type="project" value="Ensembl"/>
</dbReference>
<dbReference type="GO" id="GO:0008270">
    <property type="term" value="F:zinc ion binding"/>
    <property type="evidence" value="ECO:0007669"/>
    <property type="project" value="UniProtKB-KW"/>
</dbReference>
<dbReference type="GO" id="GO:0006915">
    <property type="term" value="P:apoptotic process"/>
    <property type="evidence" value="ECO:0007669"/>
    <property type="project" value="UniProtKB-KW"/>
</dbReference>
<dbReference type="GO" id="GO:0070417">
    <property type="term" value="P:cellular response to cold"/>
    <property type="evidence" value="ECO:0000315"/>
    <property type="project" value="UniProtKB"/>
</dbReference>
<dbReference type="GO" id="GO:1902042">
    <property type="term" value="P:negative regulation of extrinsic apoptotic signaling pathway via death domain receptors"/>
    <property type="evidence" value="ECO:0000250"/>
    <property type="project" value="UniProtKB"/>
</dbReference>
<dbReference type="GO" id="GO:1901797">
    <property type="term" value="P:negative regulation of signal transduction by p53 class mediator"/>
    <property type="evidence" value="ECO:0000250"/>
    <property type="project" value="UniProtKB"/>
</dbReference>
<dbReference type="GO" id="GO:0035872">
    <property type="term" value="P:nucleotide-binding domain, leucine rich repeat containing receptor signaling pathway"/>
    <property type="evidence" value="ECO:0000250"/>
    <property type="project" value="UniProtKB"/>
</dbReference>
<dbReference type="GO" id="GO:0043161">
    <property type="term" value="P:proteasome-mediated ubiquitin-dependent protein catabolic process"/>
    <property type="evidence" value="ECO:0000315"/>
    <property type="project" value="UniProtKB"/>
</dbReference>
<dbReference type="GO" id="GO:0070936">
    <property type="term" value="P:protein K48-linked ubiquitination"/>
    <property type="evidence" value="ECO:0000250"/>
    <property type="project" value="UniProtKB"/>
</dbReference>
<dbReference type="GO" id="GO:0016567">
    <property type="term" value="P:protein ubiquitination"/>
    <property type="evidence" value="ECO:0000250"/>
    <property type="project" value="UniProtKB"/>
</dbReference>
<dbReference type="GO" id="GO:2000374">
    <property type="term" value="P:regulation of oxygen metabolic process"/>
    <property type="evidence" value="ECO:0000315"/>
    <property type="project" value="UniProtKB"/>
</dbReference>
<dbReference type="GO" id="GO:0006511">
    <property type="term" value="P:ubiquitin-dependent protein catabolic process"/>
    <property type="evidence" value="ECO:0000315"/>
    <property type="project" value="UniProtKB"/>
</dbReference>
<dbReference type="CDD" id="cd15769">
    <property type="entry name" value="FYVE_CARP1"/>
    <property type="match status" value="1"/>
</dbReference>
<dbReference type="CDD" id="cd16706">
    <property type="entry name" value="RING-HC_CARP1"/>
    <property type="match status" value="1"/>
</dbReference>
<dbReference type="FunFam" id="1.10.720.140:FF:000001">
    <property type="entry name" value="E3 ubiquitin-protein ligase RNF34 isoform X1"/>
    <property type="match status" value="1"/>
</dbReference>
<dbReference type="FunFam" id="3.30.40.10:FF:000110">
    <property type="entry name" value="E3 ubiquitin-protein ligase RNF34 isoform X1"/>
    <property type="match status" value="1"/>
</dbReference>
<dbReference type="Gene3D" id="1.10.720.140">
    <property type="match status" value="1"/>
</dbReference>
<dbReference type="Gene3D" id="1.10.720.30">
    <property type="entry name" value="SAP domain"/>
    <property type="match status" value="1"/>
</dbReference>
<dbReference type="Gene3D" id="3.30.40.10">
    <property type="entry name" value="Zinc/RING finger domain, C3HC4 (zinc finger)"/>
    <property type="match status" value="1"/>
</dbReference>
<dbReference type="InterPro" id="IPR049320">
    <property type="entry name" value="CARP1_2_FYVE"/>
</dbReference>
<dbReference type="InterPro" id="IPR049323">
    <property type="entry name" value="CARP1_FYVE"/>
</dbReference>
<dbReference type="InterPro" id="IPR051728">
    <property type="entry name" value="RING-FYVE_E3_ubiquitin-ligase"/>
</dbReference>
<dbReference type="InterPro" id="IPR055111">
    <property type="entry name" value="RNF34L-like_HeH"/>
</dbReference>
<dbReference type="InterPro" id="IPR036361">
    <property type="entry name" value="SAP_dom_sf"/>
</dbReference>
<dbReference type="InterPro" id="IPR011011">
    <property type="entry name" value="Znf_FYVE_PHD"/>
</dbReference>
<dbReference type="InterPro" id="IPR001841">
    <property type="entry name" value="Znf_RING"/>
</dbReference>
<dbReference type="InterPro" id="IPR013083">
    <property type="entry name" value="Znf_RING/FYVE/PHD"/>
</dbReference>
<dbReference type="PANTHER" id="PTHR14879">
    <property type="entry name" value="CASPASE REGULATOR, RING FINGER DOMAIN-CONTAINING"/>
    <property type="match status" value="1"/>
</dbReference>
<dbReference type="PANTHER" id="PTHR14879:SF3">
    <property type="entry name" value="E3 UBIQUITIN-PROTEIN LIGASE RNF34"/>
    <property type="match status" value="1"/>
</dbReference>
<dbReference type="Pfam" id="PF21272">
    <property type="entry name" value="FYVE_CARP1-2"/>
    <property type="match status" value="1"/>
</dbReference>
<dbReference type="Pfam" id="PF22968">
    <property type="entry name" value="RNF34L-like_3rd"/>
    <property type="match status" value="1"/>
</dbReference>
<dbReference type="Pfam" id="PF23632">
    <property type="entry name" value="SAP_RNF34_RFFL"/>
    <property type="match status" value="1"/>
</dbReference>
<dbReference type="Pfam" id="PF13920">
    <property type="entry name" value="zf-C3HC4_3"/>
    <property type="match status" value="1"/>
</dbReference>
<dbReference type="SMART" id="SM00184">
    <property type="entry name" value="RING"/>
    <property type="match status" value="1"/>
</dbReference>
<dbReference type="SUPFAM" id="SSF57903">
    <property type="entry name" value="FYVE/PHD zinc finger"/>
    <property type="match status" value="1"/>
</dbReference>
<dbReference type="SUPFAM" id="SSF57850">
    <property type="entry name" value="RING/U-box"/>
    <property type="match status" value="1"/>
</dbReference>
<dbReference type="SUPFAM" id="SSF68906">
    <property type="entry name" value="SAP domain"/>
    <property type="match status" value="1"/>
</dbReference>
<dbReference type="PROSITE" id="PS50089">
    <property type="entry name" value="ZF_RING_2"/>
    <property type="match status" value="1"/>
</dbReference>
<keyword id="KW-0053">Apoptosis</keyword>
<keyword id="KW-1003">Cell membrane</keyword>
<keyword id="KW-0963">Cytoplasm</keyword>
<keyword id="KW-0472">Membrane</keyword>
<keyword id="KW-0479">Metal-binding</keyword>
<keyword id="KW-0539">Nucleus</keyword>
<keyword id="KW-0597">Phosphoprotein</keyword>
<keyword id="KW-1185">Reference proteome</keyword>
<keyword id="KW-0677">Repeat</keyword>
<keyword id="KW-0808">Transferase</keyword>
<keyword id="KW-0832">Ubl conjugation</keyword>
<keyword id="KW-0833">Ubl conjugation pathway</keyword>
<keyword id="KW-0862">Zinc</keyword>
<keyword id="KW-0863">Zinc-finger</keyword>
<gene>
    <name evidence="8" type="primary">Rnf34</name>
</gene>
<feature type="chain" id="PRO_0000056073" description="E3 ubiquitin-protein ligase RNF34">
    <location>
        <begin position="1"/>
        <end position="376"/>
    </location>
</feature>
<feature type="domain" description="SAP 1">
    <location>
        <begin position="115"/>
        <end position="134"/>
    </location>
</feature>
<feature type="domain" description="SAP 2">
    <location>
        <begin position="268"/>
        <end position="282"/>
    </location>
</feature>
<feature type="zinc finger region" description="FYVE-type">
    <location>
        <begin position="56"/>
        <end position="107"/>
    </location>
</feature>
<feature type="zinc finger region" description="RING-type" evidence="3">
    <location>
        <begin position="329"/>
        <end position="364"/>
    </location>
</feature>
<feature type="region of interest" description="Disordered" evidence="4">
    <location>
        <begin position="216"/>
        <end position="256"/>
    </location>
</feature>
<feature type="compositionally biased region" description="Acidic residues" evidence="4">
    <location>
        <begin position="221"/>
        <end position="246"/>
    </location>
</feature>
<feature type="site" description="Cleavage; by caspase-3" evidence="2">
    <location>
        <begin position="236"/>
        <end position="237"/>
    </location>
</feature>
<feature type="modified residue" description="Phosphoserine" evidence="2">
    <location>
        <position position="169"/>
    </location>
</feature>
<feature type="modified residue" description="Phosphoserine" evidence="9">
    <location>
        <position position="258"/>
    </location>
</feature>
<feature type="modified residue" description="Phosphoserine" evidence="9">
    <location>
        <position position="260"/>
    </location>
</feature>
<comment type="function">
    <text evidence="2 5">E3 ubiquitin-protein ligase that regulates several biological processes through the ubiquitin-mediated proteasomal degradation of various target proteins. Ubiquitinates the caspases CASP8 and CASP10, promoting their proteasomal degradation, to negatively regulate cell death downstream of death domain receptors in the extrinsic pathway of apoptosis. May mediate 'Lys-48'-linked polyubiquitination of RIPK1 and its subsequent proteasomal degradation thereby indirectly regulating the tumor necrosis factor-mediated signaling pathway. Negatively regulates p53/TP53 through its direct ubiquitination and targeting to proteasomal degradation. Indirectly, may also negatively regulate p53/TP53 through ubiquitination and degradation of SFN. Mediates PPARGC1A proteasomal degradation probably through ubiquitination thereby indirectly regulating the metabolism of brown fat cells (PubMed:22064484). Possibly involved in innate immunity, through 'Lys-48'-linked polyubiquitination of NOD1 and its subsequent proteasomal degradation.</text>
</comment>
<comment type="catalytic activity">
    <reaction evidence="2">
        <text>S-ubiquitinyl-[E2 ubiquitin-conjugating enzyme]-L-cysteine + [acceptor protein]-L-lysine = [E2 ubiquitin-conjugating enzyme]-L-cysteine + N(6)-ubiquitinyl-[acceptor protein]-L-lysine.</text>
        <dbReference type="EC" id="2.3.2.27"/>
    </reaction>
</comment>
<comment type="pathway">
    <text evidence="2">Protein modification; protein ubiquitination.</text>
</comment>
<comment type="subunit">
    <text evidence="2">Interacts with CASP8 and CASP10. Interacts with p53/TP53; involved in p53/TP53 ubiquitination. Interacts (via RING-type zinc finger) with MDM2; the interaction stabilizes MDM2. Interacts (via RING-type zinc finger) with PPARGC1A. Interacts with NOD1.</text>
</comment>
<comment type="subcellular location">
    <subcellularLocation>
        <location evidence="2">Cell membrane</location>
        <topology evidence="2">Peripheral membrane protein</topology>
    </subcellularLocation>
    <subcellularLocation>
        <location evidence="1">Endomembrane system</location>
        <topology evidence="1">Peripheral membrane protein</topology>
    </subcellularLocation>
    <subcellularLocation>
        <location evidence="2">Nucleus</location>
    </subcellularLocation>
    <subcellularLocation>
        <location evidence="2">Nucleus speckle</location>
    </subcellularLocation>
    <subcellularLocation>
        <location evidence="2">Cytoplasm</location>
        <location evidence="2">Cytosol</location>
    </subcellularLocation>
</comment>
<comment type="induction">
    <text evidence="5">Down-regulated in response to cold exposure.</text>
</comment>
<comment type="domain">
    <text evidence="2">The RING-type zinc finger is required for the ubiquitination of target proteins.</text>
</comment>
<comment type="domain">
    <text evidence="2">The FYVE-type zinc finger domain is required for localization and may confer affinity for cellular compartments enriched in phosphatidylinositol 5-phosphate and phosphatidylinositol 3-phosphate phospholipids.</text>
</comment>
<comment type="PTM">
    <text evidence="1">Autoubiquitinated (in vitro).</text>
</comment>
<comment type="PTM">
    <text evidence="2">Proteolytically cleaved by caspases upon induction of apoptosis by TNF.</text>
</comment>